<evidence type="ECO:0000250" key="1"/>
<evidence type="ECO:0000255" key="2"/>
<evidence type="ECO:0000305" key="3"/>
<comment type="function">
    <text>Higher activity toward long peptides. Acts on hydroxyproline beta-naphthylamide with almost as high an activity as on proline beta-naphthylamide.</text>
</comment>
<comment type="catalytic activity">
    <reaction>
        <text>Release of N-terminal proline from a peptide.</text>
        <dbReference type="EC" id="3.4.11.5"/>
    </reaction>
</comment>
<comment type="subunit">
    <text>Homotetramer.</text>
</comment>
<comment type="subcellular location">
    <subcellularLocation>
        <location>Cytoplasm</location>
    </subcellularLocation>
</comment>
<comment type="similarity">
    <text evidence="3">Belongs to the peptidase S33 family.</text>
</comment>
<reference key="1">
    <citation type="journal article" date="1994" name="J. Biochem.">
        <title>Isolation and characterization of the prolyl aminopeptidase gene (pap) from Aeromonas sobria: comparison with the Bacillus coagulans enzyme.</title>
        <authorList>
            <person name="Kitazono A."/>
            <person name="Kitano A."/>
            <person name="Tsuru D."/>
            <person name="Yoshimoto T."/>
        </authorList>
    </citation>
    <scope>NUCLEOTIDE SEQUENCE [GENOMIC DNA]</scope>
    <scope>PARTIAL PROTEIN SEQUENCE</scope>
</reference>
<proteinExistence type="evidence at protein level"/>
<dbReference type="EC" id="3.4.11.5"/>
<dbReference type="EMBL" id="D30714">
    <property type="protein sequence ID" value="BAA06380.1"/>
    <property type="molecule type" value="Genomic_DNA"/>
</dbReference>
<dbReference type="PIR" id="JC4184">
    <property type="entry name" value="JC4184"/>
</dbReference>
<dbReference type="SMR" id="P46547"/>
<dbReference type="STRING" id="646.BJD16_12800"/>
<dbReference type="ESTHER" id="aerso-pip">
    <property type="family name" value="Proline_iminopeptidase"/>
</dbReference>
<dbReference type="MEROPS" id="S33.008"/>
<dbReference type="GO" id="GO:0005737">
    <property type="term" value="C:cytoplasm"/>
    <property type="evidence" value="ECO:0007669"/>
    <property type="project" value="UniProtKB-SubCell"/>
</dbReference>
<dbReference type="GO" id="GO:0004177">
    <property type="term" value="F:aminopeptidase activity"/>
    <property type="evidence" value="ECO:0007669"/>
    <property type="project" value="UniProtKB-KW"/>
</dbReference>
<dbReference type="GO" id="GO:0006508">
    <property type="term" value="P:proteolysis"/>
    <property type="evidence" value="ECO:0007669"/>
    <property type="project" value="UniProtKB-KW"/>
</dbReference>
<dbReference type="Gene3D" id="3.40.50.1820">
    <property type="entry name" value="alpha/beta hydrolase"/>
    <property type="match status" value="1"/>
</dbReference>
<dbReference type="InterPro" id="IPR000073">
    <property type="entry name" value="AB_hydrolase_1"/>
</dbReference>
<dbReference type="InterPro" id="IPR029058">
    <property type="entry name" value="AB_hydrolase_fold"/>
</dbReference>
<dbReference type="InterPro" id="IPR002410">
    <property type="entry name" value="Peptidase_S33"/>
</dbReference>
<dbReference type="InterPro" id="IPR051601">
    <property type="entry name" value="Serine_prot/Carboxylest_S33"/>
</dbReference>
<dbReference type="PANTHER" id="PTHR43248">
    <property type="entry name" value="2-SUCCINYL-6-HYDROXY-2,4-CYCLOHEXADIENE-1-CARBOXYLATE SYNTHASE"/>
    <property type="match status" value="1"/>
</dbReference>
<dbReference type="PANTHER" id="PTHR43248:SF2">
    <property type="entry name" value="PROLYL AMINOPEPTIDASE"/>
    <property type="match status" value="1"/>
</dbReference>
<dbReference type="Pfam" id="PF00561">
    <property type="entry name" value="Abhydrolase_1"/>
    <property type="match status" value="1"/>
</dbReference>
<dbReference type="PRINTS" id="PR00793">
    <property type="entry name" value="PROAMNOPTASE"/>
</dbReference>
<dbReference type="SUPFAM" id="SSF53474">
    <property type="entry name" value="alpha/beta-Hydrolases"/>
    <property type="match status" value="2"/>
</dbReference>
<keyword id="KW-0031">Aminopeptidase</keyword>
<keyword id="KW-0963">Cytoplasm</keyword>
<keyword id="KW-0903">Direct protein sequencing</keyword>
<keyword id="KW-0378">Hydrolase</keyword>
<keyword id="KW-0645">Protease</keyword>
<sequence>MSSPLHYVLDGIHCEPHFFTVPLDHQQPDDEETITLFGRTLCRKDRLDDELPWLLYLQGGPGFGAPRPSANGGWIKRALQEFRVLLLDQRGTGHSTPIHAELLAHLNPRQQADYLSHFRADSIVRDAELIREQLSPDHPWSLLGQSFGGFCSLTYLSLFPDSLHEVYLTGGVAPIGRSADEVYRATYQRVADKNRAFFARFPHAQAIANRLATHLQRHDVRLPNGQRLTVEQLQQQGLDLGASGAFEELYYLLEDAFIGEKLNPAFLYQVQAMQPFNTNPVFAILHELIYCEGAASHWAAERVRGEFPALAWAQGKDFAFTGEMIFPWMFEQFRELIPLKEAAHLLAEKADWGPLYDPVQLARNKVPVACAVYAEDMYVEFDYSRETLKGLSNSRAWITNEYEHNGLRVDGEQILDRLIRLNRDC</sequence>
<accession>P46547</accession>
<name>PIP_AERSO</name>
<organism>
    <name type="scientific">Aeromonas sobria</name>
    <dbReference type="NCBI Taxonomy" id="646"/>
    <lineage>
        <taxon>Bacteria</taxon>
        <taxon>Pseudomonadati</taxon>
        <taxon>Pseudomonadota</taxon>
        <taxon>Gammaproteobacteria</taxon>
        <taxon>Aeromonadales</taxon>
        <taxon>Aeromonadaceae</taxon>
        <taxon>Aeromonas</taxon>
    </lineage>
</organism>
<protein>
    <recommendedName>
        <fullName>Proline iminopeptidase</fullName>
        <shortName>PIP</shortName>
        <ecNumber>3.4.11.5</ecNumber>
    </recommendedName>
    <alternativeName>
        <fullName>Prolyl aminopeptidase</fullName>
        <shortName>PAP</shortName>
    </alternativeName>
</protein>
<gene>
    <name type="primary">pip</name>
    <name type="synonym">pap</name>
</gene>
<feature type="initiator methionine" description="Removed">
    <location>
        <position position="1"/>
    </location>
</feature>
<feature type="chain" id="PRO_0000080834" description="Proline iminopeptidase">
    <location>
        <begin position="2"/>
        <end position="425"/>
    </location>
</feature>
<feature type="domain" description="AB hydrolase-1" evidence="2">
    <location>
        <begin position="52"/>
        <end position="315"/>
    </location>
</feature>
<feature type="active site" description="Nucleophile" evidence="1">
    <location>
        <position position="146"/>
    </location>
</feature>
<feature type="active site" evidence="1">
    <location>
        <position position="351"/>
    </location>
</feature>
<feature type="active site" description="Proton donor" evidence="1">
    <location>
        <position position="404"/>
    </location>
</feature>